<evidence type="ECO:0000255" key="1">
    <source>
        <dbReference type="HAMAP-Rule" id="MF_00262"/>
    </source>
</evidence>
<protein>
    <recommendedName>
        <fullName evidence="1">Cell division topological specificity factor</fullName>
    </recommendedName>
</protein>
<sequence length="84" mass="9395">MSILSFLLGEKKKSAAVAKERLQLIIAHERVGGRPPADYLPALQKELVAVISKYVKISNDDIRVSLERQDDLEVLEVKIEIPQA</sequence>
<keyword id="KW-0131">Cell cycle</keyword>
<keyword id="KW-0132">Cell division</keyword>
<proteinExistence type="inferred from homology"/>
<organism>
    <name type="scientific">Burkholderia pseudomallei (strain 1106a)</name>
    <dbReference type="NCBI Taxonomy" id="357348"/>
    <lineage>
        <taxon>Bacteria</taxon>
        <taxon>Pseudomonadati</taxon>
        <taxon>Pseudomonadota</taxon>
        <taxon>Betaproteobacteria</taxon>
        <taxon>Burkholderiales</taxon>
        <taxon>Burkholderiaceae</taxon>
        <taxon>Burkholderia</taxon>
        <taxon>pseudomallei group</taxon>
    </lineage>
</organism>
<feature type="chain" id="PRO_0000298091" description="Cell division topological specificity factor">
    <location>
        <begin position="1"/>
        <end position="84"/>
    </location>
</feature>
<accession>A3NY50</accession>
<gene>
    <name evidence="1" type="primary">minE</name>
    <name type="ordered locus">BURPS1106A_3031</name>
</gene>
<dbReference type="EMBL" id="CP000572">
    <property type="protein sequence ID" value="ABN91553.1"/>
    <property type="molecule type" value="Genomic_DNA"/>
</dbReference>
<dbReference type="RefSeq" id="WP_004186076.1">
    <property type="nucleotide sequence ID" value="NC_009076.1"/>
</dbReference>
<dbReference type="SMR" id="A3NY50"/>
<dbReference type="GeneID" id="93061170"/>
<dbReference type="KEGG" id="bpl:BURPS1106A_3031"/>
<dbReference type="HOGENOM" id="CLU_137929_2_1_4"/>
<dbReference type="Proteomes" id="UP000006738">
    <property type="component" value="Chromosome I"/>
</dbReference>
<dbReference type="GO" id="GO:0051301">
    <property type="term" value="P:cell division"/>
    <property type="evidence" value="ECO:0007669"/>
    <property type="project" value="UniProtKB-KW"/>
</dbReference>
<dbReference type="GO" id="GO:0032955">
    <property type="term" value="P:regulation of division septum assembly"/>
    <property type="evidence" value="ECO:0007669"/>
    <property type="project" value="InterPro"/>
</dbReference>
<dbReference type="FunFam" id="3.30.1070.10:FF:000001">
    <property type="entry name" value="Cell division topological specificity factor"/>
    <property type="match status" value="1"/>
</dbReference>
<dbReference type="Gene3D" id="3.30.1070.10">
    <property type="entry name" value="Cell division topological specificity factor MinE"/>
    <property type="match status" value="1"/>
</dbReference>
<dbReference type="HAMAP" id="MF_00262">
    <property type="entry name" value="MinE"/>
    <property type="match status" value="1"/>
</dbReference>
<dbReference type="InterPro" id="IPR005527">
    <property type="entry name" value="MinE"/>
</dbReference>
<dbReference type="InterPro" id="IPR036707">
    <property type="entry name" value="MinE_sf"/>
</dbReference>
<dbReference type="NCBIfam" id="TIGR01215">
    <property type="entry name" value="minE"/>
    <property type="match status" value="1"/>
</dbReference>
<dbReference type="NCBIfam" id="NF001422">
    <property type="entry name" value="PRK00296.1"/>
    <property type="match status" value="1"/>
</dbReference>
<dbReference type="NCBIfam" id="NF010595">
    <property type="entry name" value="PRK13989.1"/>
    <property type="match status" value="1"/>
</dbReference>
<dbReference type="Pfam" id="PF03776">
    <property type="entry name" value="MinE"/>
    <property type="match status" value="1"/>
</dbReference>
<dbReference type="SUPFAM" id="SSF55229">
    <property type="entry name" value="Cell division protein MinE topological specificity domain"/>
    <property type="match status" value="1"/>
</dbReference>
<comment type="function">
    <text evidence="1">Prevents the cell division inhibition by proteins MinC and MinD at internal division sites while permitting inhibition at polar sites. This ensures cell division at the proper site by restricting the formation of a division septum at the midpoint of the long axis of the cell.</text>
</comment>
<comment type="similarity">
    <text evidence="1">Belongs to the MinE family.</text>
</comment>
<reference key="1">
    <citation type="journal article" date="2010" name="Genome Biol. Evol.">
        <title>Continuing evolution of Burkholderia mallei through genome reduction and large-scale rearrangements.</title>
        <authorList>
            <person name="Losada L."/>
            <person name="Ronning C.M."/>
            <person name="DeShazer D."/>
            <person name="Woods D."/>
            <person name="Fedorova N."/>
            <person name="Kim H.S."/>
            <person name="Shabalina S.A."/>
            <person name="Pearson T.R."/>
            <person name="Brinkac L."/>
            <person name="Tan P."/>
            <person name="Nandi T."/>
            <person name="Crabtree J."/>
            <person name="Badger J."/>
            <person name="Beckstrom-Sternberg S."/>
            <person name="Saqib M."/>
            <person name="Schutzer S.E."/>
            <person name="Keim P."/>
            <person name="Nierman W.C."/>
        </authorList>
    </citation>
    <scope>NUCLEOTIDE SEQUENCE [LARGE SCALE GENOMIC DNA]</scope>
    <source>
        <strain>1106a</strain>
    </source>
</reference>
<name>MINE_BURP0</name>